<reference key="1">
    <citation type="journal article" date="1992" name="Nucleic Acids Res.">
        <title>Cloning by recognition site screening of two novel GT box binding proteins: a family of Sp1 related genes.</title>
        <authorList>
            <person name="Hagen G."/>
            <person name="Mueller S."/>
            <person name="Beato M."/>
            <person name="Suske G."/>
        </authorList>
    </citation>
    <scope>NUCLEOTIDE SEQUENCE [MRNA]</scope>
    <scope>VARIANT LYS-197</scope>
    <source>
        <tissue>Uterus</tissue>
    </source>
</reference>
<reference key="2">
    <citation type="journal article" date="2004" name="Nat. Genet.">
        <title>Complete sequencing and characterization of 21,243 full-length human cDNAs.</title>
        <authorList>
            <person name="Ota T."/>
            <person name="Suzuki Y."/>
            <person name="Nishikawa T."/>
            <person name="Otsuki T."/>
            <person name="Sugiyama T."/>
            <person name="Irie R."/>
            <person name="Wakamatsu A."/>
            <person name="Hayashi K."/>
            <person name="Sato H."/>
            <person name="Nagai K."/>
            <person name="Kimura K."/>
            <person name="Makita H."/>
            <person name="Sekine M."/>
            <person name="Obayashi M."/>
            <person name="Nishi T."/>
            <person name="Shibahara T."/>
            <person name="Tanaka T."/>
            <person name="Ishii S."/>
            <person name="Yamamoto J."/>
            <person name="Saito K."/>
            <person name="Kawai Y."/>
            <person name="Isono Y."/>
            <person name="Nakamura Y."/>
            <person name="Nagahari K."/>
            <person name="Murakami K."/>
            <person name="Yasuda T."/>
            <person name="Iwayanagi T."/>
            <person name="Wagatsuma M."/>
            <person name="Shiratori A."/>
            <person name="Sudo H."/>
            <person name="Hosoiri T."/>
            <person name="Kaku Y."/>
            <person name="Kodaira H."/>
            <person name="Kondo H."/>
            <person name="Sugawara M."/>
            <person name="Takahashi M."/>
            <person name="Kanda K."/>
            <person name="Yokoi T."/>
            <person name="Furuya T."/>
            <person name="Kikkawa E."/>
            <person name="Omura Y."/>
            <person name="Abe K."/>
            <person name="Kamihara K."/>
            <person name="Katsuta N."/>
            <person name="Sato K."/>
            <person name="Tanikawa M."/>
            <person name="Yamazaki M."/>
            <person name="Ninomiya K."/>
            <person name="Ishibashi T."/>
            <person name="Yamashita H."/>
            <person name="Murakawa K."/>
            <person name="Fujimori K."/>
            <person name="Tanai H."/>
            <person name="Kimata M."/>
            <person name="Watanabe M."/>
            <person name="Hiraoka S."/>
            <person name="Chiba Y."/>
            <person name="Ishida S."/>
            <person name="Ono Y."/>
            <person name="Takiguchi S."/>
            <person name="Watanabe S."/>
            <person name="Yosida M."/>
            <person name="Hotuta T."/>
            <person name="Kusano J."/>
            <person name="Kanehori K."/>
            <person name="Takahashi-Fujii A."/>
            <person name="Hara H."/>
            <person name="Tanase T.-O."/>
            <person name="Nomura Y."/>
            <person name="Togiya S."/>
            <person name="Komai F."/>
            <person name="Hara R."/>
            <person name="Takeuchi K."/>
            <person name="Arita M."/>
            <person name="Imose N."/>
            <person name="Musashino K."/>
            <person name="Yuuki H."/>
            <person name="Oshima A."/>
            <person name="Sasaki N."/>
            <person name="Aotsuka S."/>
            <person name="Yoshikawa Y."/>
            <person name="Matsunawa H."/>
            <person name="Ichihara T."/>
            <person name="Shiohata N."/>
            <person name="Sano S."/>
            <person name="Moriya S."/>
            <person name="Momiyama H."/>
            <person name="Satoh N."/>
            <person name="Takami S."/>
            <person name="Terashima Y."/>
            <person name="Suzuki O."/>
            <person name="Nakagawa S."/>
            <person name="Senoh A."/>
            <person name="Mizoguchi H."/>
            <person name="Goto Y."/>
            <person name="Shimizu F."/>
            <person name="Wakebe H."/>
            <person name="Hishigaki H."/>
            <person name="Watanabe T."/>
            <person name="Sugiyama A."/>
            <person name="Takemoto M."/>
            <person name="Kawakami B."/>
            <person name="Yamazaki M."/>
            <person name="Watanabe K."/>
            <person name="Kumagai A."/>
            <person name="Itakura S."/>
            <person name="Fukuzumi Y."/>
            <person name="Fujimori Y."/>
            <person name="Komiyama M."/>
            <person name="Tashiro H."/>
            <person name="Tanigami A."/>
            <person name="Fujiwara T."/>
            <person name="Ono T."/>
            <person name="Yamada K."/>
            <person name="Fujii Y."/>
            <person name="Ozaki K."/>
            <person name="Hirao M."/>
            <person name="Ohmori Y."/>
            <person name="Kawabata A."/>
            <person name="Hikiji T."/>
            <person name="Kobatake N."/>
            <person name="Inagaki H."/>
            <person name="Ikema Y."/>
            <person name="Okamoto S."/>
            <person name="Okitani R."/>
            <person name="Kawakami T."/>
            <person name="Noguchi S."/>
            <person name="Itoh T."/>
            <person name="Shigeta K."/>
            <person name="Senba T."/>
            <person name="Matsumura K."/>
            <person name="Nakajima Y."/>
            <person name="Mizuno T."/>
            <person name="Morinaga M."/>
            <person name="Sasaki M."/>
            <person name="Togashi T."/>
            <person name="Oyama M."/>
            <person name="Hata H."/>
            <person name="Watanabe M."/>
            <person name="Komatsu T."/>
            <person name="Mizushima-Sugano J."/>
            <person name="Satoh T."/>
            <person name="Shirai Y."/>
            <person name="Takahashi Y."/>
            <person name="Nakagawa K."/>
            <person name="Okumura K."/>
            <person name="Nagase T."/>
            <person name="Nomura N."/>
            <person name="Kikuchi H."/>
            <person name="Masuho Y."/>
            <person name="Yamashita R."/>
            <person name="Nakai K."/>
            <person name="Yada T."/>
            <person name="Nakamura Y."/>
            <person name="Ohara O."/>
            <person name="Isogai T."/>
            <person name="Sugano S."/>
        </authorList>
    </citation>
    <scope>NUCLEOTIDE SEQUENCE [LARGE SCALE MRNA]</scope>
    <source>
        <tissue>Brain</tissue>
    </source>
</reference>
<reference key="3">
    <citation type="journal article" date="2003" name="Nature">
        <title>The DNA sequence of human chromosome 7.</title>
        <authorList>
            <person name="Hillier L.W."/>
            <person name="Fulton R.S."/>
            <person name="Fulton L.A."/>
            <person name="Graves T.A."/>
            <person name="Pepin K.H."/>
            <person name="Wagner-McPherson C."/>
            <person name="Layman D."/>
            <person name="Maas J."/>
            <person name="Jaeger S."/>
            <person name="Walker R."/>
            <person name="Wylie K."/>
            <person name="Sekhon M."/>
            <person name="Becker M.C."/>
            <person name="O'Laughlin M.D."/>
            <person name="Schaller M.E."/>
            <person name="Fewell G.A."/>
            <person name="Delehaunty K.D."/>
            <person name="Miner T.L."/>
            <person name="Nash W.E."/>
            <person name="Cordes M."/>
            <person name="Du H."/>
            <person name="Sun H."/>
            <person name="Edwards J."/>
            <person name="Bradshaw-Cordum H."/>
            <person name="Ali J."/>
            <person name="Andrews S."/>
            <person name="Isak A."/>
            <person name="Vanbrunt A."/>
            <person name="Nguyen C."/>
            <person name="Du F."/>
            <person name="Lamar B."/>
            <person name="Courtney L."/>
            <person name="Kalicki J."/>
            <person name="Ozersky P."/>
            <person name="Bielicki L."/>
            <person name="Scott K."/>
            <person name="Holmes A."/>
            <person name="Harkins R."/>
            <person name="Harris A."/>
            <person name="Strong C.M."/>
            <person name="Hou S."/>
            <person name="Tomlinson C."/>
            <person name="Dauphin-Kohlberg S."/>
            <person name="Kozlowicz-Reilly A."/>
            <person name="Leonard S."/>
            <person name="Rohlfing T."/>
            <person name="Rock S.M."/>
            <person name="Tin-Wollam A.-M."/>
            <person name="Abbott A."/>
            <person name="Minx P."/>
            <person name="Maupin R."/>
            <person name="Strowmatt C."/>
            <person name="Latreille P."/>
            <person name="Miller N."/>
            <person name="Johnson D."/>
            <person name="Murray J."/>
            <person name="Woessner J.P."/>
            <person name="Wendl M.C."/>
            <person name="Yang S.-P."/>
            <person name="Schultz B.R."/>
            <person name="Wallis J.W."/>
            <person name="Spieth J."/>
            <person name="Bieri T.A."/>
            <person name="Nelson J.O."/>
            <person name="Berkowicz N."/>
            <person name="Wohldmann P.E."/>
            <person name="Cook L.L."/>
            <person name="Hickenbotham M.T."/>
            <person name="Eldred J."/>
            <person name="Williams D."/>
            <person name="Bedell J.A."/>
            <person name="Mardis E.R."/>
            <person name="Clifton S.W."/>
            <person name="Chissoe S.L."/>
            <person name="Marra M.A."/>
            <person name="Raymond C."/>
            <person name="Haugen E."/>
            <person name="Gillett W."/>
            <person name="Zhou Y."/>
            <person name="James R."/>
            <person name="Phelps K."/>
            <person name="Iadanoto S."/>
            <person name="Bubb K."/>
            <person name="Simms E."/>
            <person name="Levy R."/>
            <person name="Clendenning J."/>
            <person name="Kaul R."/>
            <person name="Kent W.J."/>
            <person name="Furey T.S."/>
            <person name="Baertsch R.A."/>
            <person name="Brent M.R."/>
            <person name="Keibler E."/>
            <person name="Flicek P."/>
            <person name="Bork P."/>
            <person name="Suyama M."/>
            <person name="Bailey J.A."/>
            <person name="Portnoy M.E."/>
            <person name="Torrents D."/>
            <person name="Chinwalla A.T."/>
            <person name="Gish W.R."/>
            <person name="Eddy S.R."/>
            <person name="McPherson J.D."/>
            <person name="Olson M.V."/>
            <person name="Eichler E.E."/>
            <person name="Green E.D."/>
            <person name="Waterston R.H."/>
            <person name="Wilson R.K."/>
        </authorList>
    </citation>
    <scope>NUCLEOTIDE SEQUENCE [LARGE SCALE GENOMIC DNA]</scope>
</reference>
<reference key="4">
    <citation type="submission" date="2005-07" db="EMBL/GenBank/DDBJ databases">
        <authorList>
            <person name="Mural R.J."/>
            <person name="Istrail S."/>
            <person name="Sutton G.G."/>
            <person name="Florea L."/>
            <person name="Halpern A.L."/>
            <person name="Mobarry C.M."/>
            <person name="Lippert R."/>
            <person name="Walenz B."/>
            <person name="Shatkay H."/>
            <person name="Dew I."/>
            <person name="Miller J.R."/>
            <person name="Flanigan M.J."/>
            <person name="Edwards N.J."/>
            <person name="Bolanos R."/>
            <person name="Fasulo D."/>
            <person name="Halldorsson B.V."/>
            <person name="Hannenhalli S."/>
            <person name="Turner R."/>
            <person name="Yooseph S."/>
            <person name="Lu F."/>
            <person name="Nusskern D.R."/>
            <person name="Shue B.C."/>
            <person name="Zheng X.H."/>
            <person name="Zhong F."/>
            <person name="Delcher A.L."/>
            <person name="Huson D.H."/>
            <person name="Kravitz S.A."/>
            <person name="Mouchard L."/>
            <person name="Reinert K."/>
            <person name="Remington K.A."/>
            <person name="Clark A.G."/>
            <person name="Waterman M.S."/>
            <person name="Eichler E.E."/>
            <person name="Adams M.D."/>
            <person name="Hunkapiller M.W."/>
            <person name="Myers E.W."/>
            <person name="Venter J.C."/>
        </authorList>
    </citation>
    <scope>NUCLEOTIDE SEQUENCE [LARGE SCALE GENOMIC DNA]</scope>
</reference>
<reference key="5">
    <citation type="journal article" date="2004" name="Genome Res.">
        <title>The status, quality, and expansion of the NIH full-length cDNA project: the Mammalian Gene Collection (MGC).</title>
        <authorList>
            <consortium name="The MGC Project Team"/>
        </authorList>
    </citation>
    <scope>NUCLEOTIDE SEQUENCE [LARGE SCALE MRNA]</scope>
</reference>
<reference key="6">
    <citation type="journal article" date="2009" name="Anal. Chem.">
        <title>Lys-N and trypsin cover complementary parts of the phosphoproteome in a refined SCX-based approach.</title>
        <authorList>
            <person name="Gauci S."/>
            <person name="Helbig A.O."/>
            <person name="Slijper M."/>
            <person name="Krijgsveld J."/>
            <person name="Heck A.J."/>
            <person name="Mohammed S."/>
        </authorList>
    </citation>
    <scope>IDENTIFICATION BY MASS SPECTROMETRY [LARGE SCALE ANALYSIS]</scope>
</reference>
<reference key="7">
    <citation type="journal article" date="2011" name="Sci. Signal.">
        <title>System-wide temporal characterization of the proteome and phosphoproteome of human embryonic stem cell differentiation.</title>
        <authorList>
            <person name="Rigbolt K.T."/>
            <person name="Prokhorova T.A."/>
            <person name="Akimov V."/>
            <person name="Henningsen J."/>
            <person name="Johansen P.T."/>
            <person name="Kratchmarova I."/>
            <person name="Kassem M."/>
            <person name="Mann M."/>
            <person name="Olsen J.V."/>
            <person name="Blagoev B."/>
        </authorList>
    </citation>
    <scope>IDENTIFICATION BY MASS SPECTROMETRY [LARGE SCALE ANALYSIS]</scope>
</reference>
<reference key="8">
    <citation type="journal article" date="2013" name="J. Proteome Res.">
        <title>Toward a comprehensive characterization of a human cancer cell phosphoproteome.</title>
        <authorList>
            <person name="Zhou H."/>
            <person name="Di Palma S."/>
            <person name="Preisinger C."/>
            <person name="Peng M."/>
            <person name="Polat A.N."/>
            <person name="Heck A.J."/>
            <person name="Mohammed S."/>
        </authorList>
    </citation>
    <scope>PHOSPHORYLATION [LARGE SCALE ANALYSIS] AT SER-46</scope>
    <scope>IDENTIFICATION BY MASS SPECTROMETRY [LARGE SCALE ANALYSIS]</scope>
    <source>
        <tissue>Erythroleukemia</tissue>
    </source>
</reference>
<reference key="9">
    <citation type="journal article" date="2020" name="Cell. Mol. Life Sci.">
        <title>The evolution of the 9aaTAD domain in Sp2 proteins: inactivation with valines and intron reservoirs.</title>
        <authorList>
            <person name="Piskacek M."/>
            <person name="Havelka M."/>
            <person name="Jendruchova K."/>
            <person name="Knight A."/>
            <person name="Keegan L.P."/>
        </authorList>
    </citation>
    <scope>INACTIVATION OF 9AATAD MOTIF</scope>
</reference>
<protein>
    <recommendedName>
        <fullName>Transcription factor Sp4</fullName>
    </recommendedName>
    <alternativeName>
        <fullName>SPR-1</fullName>
    </alternativeName>
</protein>
<organism>
    <name type="scientific">Homo sapiens</name>
    <name type="common">Human</name>
    <dbReference type="NCBI Taxonomy" id="9606"/>
    <lineage>
        <taxon>Eukaryota</taxon>
        <taxon>Metazoa</taxon>
        <taxon>Chordata</taxon>
        <taxon>Craniata</taxon>
        <taxon>Vertebrata</taxon>
        <taxon>Euteleostomi</taxon>
        <taxon>Mammalia</taxon>
        <taxon>Eutheria</taxon>
        <taxon>Euarchontoglires</taxon>
        <taxon>Primates</taxon>
        <taxon>Haplorrhini</taxon>
        <taxon>Catarrhini</taxon>
        <taxon>Hominidae</taxon>
        <taxon>Homo</taxon>
    </lineage>
</organism>
<feature type="chain" id="PRO_0000047144" description="Transcription factor Sp4">
    <location>
        <begin position="1"/>
        <end position="784"/>
    </location>
</feature>
<feature type="zinc finger region" description="C2H2-type 1" evidence="1">
    <location>
        <begin position="647"/>
        <end position="671"/>
    </location>
</feature>
<feature type="zinc finger region" description="C2H2-type 2" evidence="1">
    <location>
        <begin position="677"/>
        <end position="701"/>
    </location>
</feature>
<feature type="zinc finger region" description="C2H2-type 3" evidence="1">
    <location>
        <begin position="707"/>
        <end position="729"/>
    </location>
</feature>
<feature type="region of interest" description="Disordered" evidence="2">
    <location>
        <begin position="1"/>
        <end position="68"/>
    </location>
</feature>
<feature type="region of interest" description="Disordered" evidence="2">
    <location>
        <begin position="109"/>
        <end position="150"/>
    </location>
</feature>
<feature type="region of interest" description="Disordered" evidence="2">
    <location>
        <begin position="281"/>
        <end position="390"/>
    </location>
</feature>
<feature type="short sequence motif" description="9aaTAD; inactive" evidence="4">
    <location>
        <begin position="467"/>
        <end position="475"/>
    </location>
</feature>
<feature type="compositionally biased region" description="Polar residues" evidence="2">
    <location>
        <begin position="37"/>
        <end position="46"/>
    </location>
</feature>
<feature type="compositionally biased region" description="Polar residues" evidence="2">
    <location>
        <begin position="109"/>
        <end position="120"/>
    </location>
</feature>
<feature type="compositionally biased region" description="Low complexity" evidence="2">
    <location>
        <begin position="121"/>
        <end position="136"/>
    </location>
</feature>
<feature type="compositionally biased region" description="Polar residues" evidence="2">
    <location>
        <begin position="137"/>
        <end position="150"/>
    </location>
</feature>
<feature type="compositionally biased region" description="Polar residues" evidence="2">
    <location>
        <begin position="291"/>
        <end position="301"/>
    </location>
</feature>
<feature type="compositionally biased region" description="Low complexity" evidence="2">
    <location>
        <begin position="302"/>
        <end position="344"/>
    </location>
</feature>
<feature type="compositionally biased region" description="Polar residues" evidence="2">
    <location>
        <begin position="346"/>
        <end position="356"/>
    </location>
</feature>
<feature type="compositionally biased region" description="Low complexity" evidence="2">
    <location>
        <begin position="364"/>
        <end position="380"/>
    </location>
</feature>
<feature type="compositionally biased region" description="Polar residues" evidence="2">
    <location>
        <begin position="381"/>
        <end position="390"/>
    </location>
</feature>
<feature type="modified residue" description="Phosphoserine" evidence="6">
    <location>
        <position position="46"/>
    </location>
</feature>
<feature type="sequence variant" id="VAR_047975" description="In dbSNP:rs1042848." evidence="3">
    <original>Q</original>
    <variation>K</variation>
    <location>
        <position position="197"/>
    </location>
</feature>
<feature type="sequence conflict" description="In Ref. 1; CAA48563." evidence="5" ref="1">
    <original>QP</original>
    <variation>HA</variation>
    <location>
        <begin position="379"/>
        <end position="380"/>
    </location>
</feature>
<feature type="sequence conflict" description="In Ref. 1; CAA48563." evidence="5" ref="1">
    <original>A</original>
    <variation>Q</variation>
    <location>
        <position position="386"/>
    </location>
</feature>
<name>SP4_HUMAN</name>
<comment type="function">
    <text>Binds to GT and GC boxes promoters elements. Probable transcriptional activator.</text>
</comment>
<comment type="interaction">
    <interactant intactId="EBI-10198587">
        <id>Q02446</id>
    </interactant>
    <interactant intactId="EBI-77818">
        <id>Q13444</id>
        <label>ADAM15</label>
    </interactant>
    <organismsDiffer>false</organismsDiffer>
    <experiments>3</experiments>
</comment>
<comment type="interaction">
    <interactant intactId="EBI-10198587">
        <id>Q02446</id>
    </interactant>
    <interactant intactId="EBI-541426">
        <id>Q9BXS5</id>
        <label>AP1M1</label>
    </interactant>
    <organismsDiffer>false</organismsDiffer>
    <experiments>3</experiments>
</comment>
<comment type="interaction">
    <interactant intactId="EBI-10198587">
        <id>Q02446</id>
    </interactant>
    <interactant intactId="EBI-10298510">
        <id>Q9BTQ8</id>
        <label>ATXN7L1</label>
    </interactant>
    <organismsDiffer>false</organismsDiffer>
    <experiments>3</experiments>
</comment>
<comment type="interaction">
    <interactant intactId="EBI-10198587">
        <id>Q02446</id>
    </interactant>
    <interactant intactId="EBI-16429704">
        <id>A0A0S2Z5G4</id>
        <label>BANP</label>
    </interactant>
    <organismsDiffer>false</organismsDiffer>
    <experiments>3</experiments>
</comment>
<comment type="interaction">
    <interactant intactId="EBI-10198587">
        <id>Q02446</id>
    </interactant>
    <interactant intactId="EBI-16429313">
        <id>B4DE54</id>
        <label>BANP</label>
    </interactant>
    <organismsDiffer>false</organismsDiffer>
    <experiments>3</experiments>
</comment>
<comment type="interaction">
    <interactant intactId="EBI-10198587">
        <id>Q02446</id>
    </interactant>
    <interactant intactId="EBI-11524452">
        <id>Q8N9N5-2</id>
        <label>BANP</label>
    </interactant>
    <organismsDiffer>false</organismsDiffer>
    <experiments>3</experiments>
</comment>
<comment type="interaction">
    <interactant intactId="EBI-10198587">
        <id>Q02446</id>
    </interactant>
    <interactant intactId="EBI-16429296">
        <id>Q8N9N5-7</id>
        <label>BANP</label>
    </interactant>
    <organismsDiffer>false</organismsDiffer>
    <experiments>3</experiments>
</comment>
<comment type="interaction">
    <interactant intactId="EBI-10198587">
        <id>Q02446</id>
    </interactant>
    <interactant intactId="EBI-10292696">
        <id>Q96Q77</id>
        <label>CIB3</label>
    </interactant>
    <organismsDiffer>false</organismsDiffer>
    <experiments>6</experiments>
</comment>
<comment type="interaction">
    <interactant intactId="EBI-10198587">
        <id>Q02446</id>
    </interactant>
    <interactant intactId="EBI-747133">
        <id>P27658</id>
        <label>COL8A1</label>
    </interactant>
    <organismsDiffer>false</organismsDiffer>
    <experiments>3</experiments>
</comment>
<comment type="interaction">
    <interactant intactId="EBI-10198587">
        <id>Q02446</id>
    </interactant>
    <interactant intactId="EBI-1758534">
        <id>P41970</id>
        <label>ELK3</label>
    </interactant>
    <organismsDiffer>false</organismsDiffer>
    <experiments>3</experiments>
</comment>
<comment type="interaction">
    <interactant intactId="EBI-10198587">
        <id>Q02446</id>
    </interactant>
    <interactant intactId="EBI-10255915">
        <id>Q75MZ5</id>
        <label>FOXP2</label>
    </interactant>
    <organismsDiffer>false</organismsDiffer>
    <experiments>4</experiments>
</comment>
<comment type="interaction">
    <interactant intactId="EBI-10198587">
        <id>Q02446</id>
    </interactant>
    <interactant intactId="EBI-389518">
        <id>P52655</id>
        <label>GTF2A1</label>
    </interactant>
    <organismsDiffer>false</organismsDiffer>
    <experiments>3</experiments>
</comment>
<comment type="interaction">
    <interactant intactId="EBI-10198587">
        <id>Q02446</id>
    </interactant>
    <interactant intactId="EBI-742259">
        <id>Q8TAP4</id>
        <label>LMO3</label>
    </interactant>
    <organismsDiffer>false</organismsDiffer>
    <experiments>3</experiments>
</comment>
<comment type="interaction">
    <interactant intactId="EBI-10198587">
        <id>Q02446</id>
    </interactant>
    <interactant intactId="EBI-739832">
        <id>Q8TBB1</id>
        <label>LNX1</label>
    </interactant>
    <organismsDiffer>false</organismsDiffer>
    <experiments>3</experiments>
</comment>
<comment type="interaction">
    <interactant intactId="EBI-10198587">
        <id>Q02446</id>
    </interactant>
    <interactant intactId="EBI-10241801">
        <id>Q4G0S1</id>
        <label>LOC730441</label>
    </interactant>
    <organismsDiffer>false</organismsDiffer>
    <experiments>3</experiments>
</comment>
<comment type="interaction">
    <interactant intactId="EBI-10198587">
        <id>Q02446</id>
    </interactant>
    <interactant intactId="EBI-348259">
        <id>Q96EZ8</id>
        <label>MCRS1</label>
    </interactant>
    <organismsDiffer>false</organismsDiffer>
    <experiments>3</experiments>
</comment>
<comment type="interaction">
    <interactant intactId="EBI-10198587">
        <id>Q02446</id>
    </interactant>
    <interactant intactId="EBI-11956831">
        <id>Q13952-2</id>
        <label>NFYC</label>
    </interactant>
    <organismsDiffer>false</organismsDiffer>
    <experiments>3</experiments>
</comment>
<comment type="interaction">
    <interactant intactId="EBI-10198587">
        <id>Q02446</id>
    </interactant>
    <interactant intactId="EBI-2547810">
        <id>Q16656</id>
        <label>NRF1</label>
    </interactant>
    <organismsDiffer>false</organismsDiffer>
    <experiments>3</experiments>
</comment>
<comment type="interaction">
    <interactant intactId="EBI-10198587">
        <id>Q02446</id>
    </interactant>
    <interactant intactId="EBI-11742836">
        <id>Q16656-4</id>
        <label>NRF1</label>
    </interactant>
    <organismsDiffer>false</organismsDiffer>
    <experiments>3</experiments>
</comment>
<comment type="interaction">
    <interactant intactId="EBI-10198587">
        <id>Q02446</id>
    </interactant>
    <interactant intactId="EBI-448407">
        <id>Q9HAT8</id>
        <label>PELI2</label>
    </interactant>
    <organismsDiffer>false</organismsDiffer>
    <experiments>3</experiments>
</comment>
<comment type="interaction">
    <interactant intactId="EBI-10198587">
        <id>Q02446</id>
    </interactant>
    <interactant intactId="EBI-1045072">
        <id>Q96T60</id>
        <label>PNKP</label>
    </interactant>
    <organismsDiffer>false</organismsDiffer>
    <experiments>3</experiments>
</comment>
<comment type="interaction">
    <interactant intactId="EBI-10198587">
        <id>Q02446</id>
    </interactant>
    <interactant intactId="EBI-1389308">
        <id>Q7Z3K3</id>
        <label>POGZ</label>
    </interactant>
    <organismsDiffer>false</organismsDiffer>
    <experiments>3</experiments>
</comment>
<comment type="interaction">
    <interactant intactId="EBI-10198587">
        <id>Q02446</id>
    </interactant>
    <interactant intactId="EBI-624770">
        <id>P14859</id>
        <label>POU2F1</label>
    </interactant>
    <organismsDiffer>false</organismsDiffer>
    <experiments>5</experiments>
</comment>
<comment type="interaction">
    <interactant intactId="EBI-10198587">
        <id>Q02446</id>
    </interactant>
    <interactant intactId="EBI-11526590">
        <id>P14859-6</id>
        <label>POU2F1</label>
    </interactant>
    <organismsDiffer>false</organismsDiffer>
    <experiments>3</experiments>
</comment>
<comment type="interaction">
    <interactant intactId="EBI-10198587">
        <id>Q02446</id>
    </interactant>
    <interactant intactId="EBI-10172814">
        <id>P86479</id>
        <label>PRR20C</label>
    </interactant>
    <organismsDiffer>false</organismsDiffer>
    <experiments>5</experiments>
</comment>
<comment type="interaction">
    <interactant intactId="EBI-10198587">
        <id>Q02446</id>
    </interactant>
    <interactant intactId="EBI-12754095">
        <id>P86480</id>
        <label>PRR20D</label>
    </interactant>
    <organismsDiffer>false</organismsDiffer>
    <experiments>3</experiments>
</comment>
<comment type="interaction">
    <interactant intactId="EBI-10198587">
        <id>Q02446</id>
    </interactant>
    <interactant intactId="EBI-10198587">
        <id>Q02446</id>
        <label>SP4</label>
    </interactant>
    <organismsDiffer>false</organismsDiffer>
    <experiments>3</experiments>
</comment>
<comment type="interaction">
    <interactant intactId="EBI-10198587">
        <id>Q02446</id>
    </interactant>
    <interactant intactId="EBI-12023934">
        <id>Q5MJ10</id>
        <label>SPANXN2</label>
    </interactant>
    <organismsDiffer>false</organismsDiffer>
    <experiments>3</experiments>
</comment>
<comment type="interaction">
    <interactant intactId="EBI-10198587">
        <id>Q02446</id>
    </interactant>
    <interactant intactId="EBI-12037215">
        <id>Q5MJ09</id>
        <label>SPANXN3</label>
    </interactant>
    <organismsDiffer>false</organismsDiffer>
    <experiments>3</experiments>
</comment>
<comment type="interaction">
    <interactant intactId="EBI-10198587">
        <id>Q02446</id>
    </interactant>
    <interactant intactId="EBI-11980193">
        <id>Q14119</id>
        <label>VEZF1</label>
    </interactant>
    <organismsDiffer>false</organismsDiffer>
    <experiments>3</experiments>
</comment>
<comment type="subcellular location">
    <subcellularLocation>
        <location>Nucleus</location>
    </subcellularLocation>
</comment>
<comment type="tissue specificity">
    <text>Abundant in brain.</text>
</comment>
<comment type="domain">
    <text evidence="4">The 9aaTAD motif is a transactivation domain present in a large number of yeast and animal transcription factors. In SP4, the motif is inactive.</text>
</comment>
<comment type="similarity">
    <text evidence="5">Belongs to the Sp1 C2H2-type zinc-finger protein family.</text>
</comment>
<proteinExistence type="evidence at protein level"/>
<gene>
    <name type="primary">SP4</name>
</gene>
<accession>Q02446</accession>
<accession>O60402</accession>
<accession>Q32M52</accession>
<sequence length="784" mass="81985">MSDQKKEEEEEAAAAAAMATEGGKTSEPENNNKKPKTSGSQDSQPSPLALLAATCSKIGTPGENQATGQQQIIIDPSQGLVQLQNQPQQLELVTTQLAGNAWQLVASTPPASKENNVSQPASSSSSSSSSNNGSASPTKTKSGNSSTPGQFQVIQVQNPSGSVQYQVIPQLQTVEGQQIQINPTSSSSLQDLQGQIQLISAGNNQAILTAANRTASGNILAQNLANQTVPVQIRPGVSIPLQLQTLPGTQAQVVTTLPINIGGVTLALPVINNVAAGGGTGQVGQPAATADSGTSNGNQLVSTPTNTTTSASTMPESPSSSTTCTTTASTSLTSSDTLVSSADTGQYASTSASSSERTIEESQTPAATESEAQSSSQLQPNGMQNAQDQSNSLQQVQIVGQPILQQIQIQQPQQQIIQAIPPQSFQLQSGQTIQTIQQQPLQNVQLQAVNPTQVLIRAPTLTPSGQISWQTVQVQNIQSLSNLQVQNAGLSQQLTITPVSSSGGTTLAQIAPVAVAGAPITLNTAQLASVPNLQTVSVANLGAAGVQVQGVPVTITSVAGQQQGQDGVKVQQATIAPVTVAVGGIANATIGAVSPDQLTQVHLQQGQQTSDQEVQPGKRLRRVACSCPNCREGEGRGSNEPGKKKQHICHIEGCGKVYGKTSHLRAHLRWHTGERPFICNWMFCGKRFTRSDELQRHRRTHTGEKRFECPECSKRFMRSDHLSKHVKTHQNKKGGGTALAIVTSGELDSSVTEVLGSPRIVTVAAISQDSNPATPNVSTNMEEF</sequence>
<dbReference type="EMBL" id="X68561">
    <property type="protein sequence ID" value="CAA48563.1"/>
    <property type="molecule type" value="mRNA"/>
</dbReference>
<dbReference type="EMBL" id="AK289728">
    <property type="protein sequence ID" value="BAF82417.1"/>
    <property type="molecule type" value="mRNA"/>
</dbReference>
<dbReference type="EMBL" id="AC004595">
    <property type="status" value="NOT_ANNOTATED_CDS"/>
    <property type="molecule type" value="Genomic_DNA"/>
</dbReference>
<dbReference type="EMBL" id="CH471073">
    <property type="protein sequence ID" value="EAW93733.1"/>
    <property type="molecule type" value="Genomic_DNA"/>
</dbReference>
<dbReference type="EMBL" id="BC109300">
    <property type="protein sequence ID" value="AAI09301.1"/>
    <property type="molecule type" value="mRNA"/>
</dbReference>
<dbReference type="CCDS" id="CCDS5373.1"/>
<dbReference type="PIR" id="S26638">
    <property type="entry name" value="S26638"/>
</dbReference>
<dbReference type="RefSeq" id="NP_001313472.1">
    <property type="nucleotide sequence ID" value="NM_001326543.1"/>
</dbReference>
<dbReference type="RefSeq" id="NP_003103.2">
    <property type="nucleotide sequence ID" value="NM_003112.5"/>
</dbReference>
<dbReference type="SMR" id="Q02446"/>
<dbReference type="BioGRID" id="112554">
    <property type="interactions" value="63"/>
</dbReference>
<dbReference type="FunCoup" id="Q02446">
    <property type="interactions" value="3233"/>
</dbReference>
<dbReference type="IntAct" id="Q02446">
    <property type="interactions" value="34"/>
</dbReference>
<dbReference type="STRING" id="9606.ENSP00000222584"/>
<dbReference type="GlyCosmos" id="Q02446">
    <property type="glycosylation" value="22 sites, 2 glycans"/>
</dbReference>
<dbReference type="GlyGen" id="Q02446">
    <property type="glycosylation" value="24 sites, 2 O-linked glycans (22 sites)"/>
</dbReference>
<dbReference type="iPTMnet" id="Q02446"/>
<dbReference type="PhosphoSitePlus" id="Q02446"/>
<dbReference type="BioMuta" id="SP4"/>
<dbReference type="DMDM" id="218511800"/>
<dbReference type="jPOST" id="Q02446"/>
<dbReference type="MassIVE" id="Q02446"/>
<dbReference type="PaxDb" id="9606-ENSP00000222584"/>
<dbReference type="PeptideAtlas" id="Q02446"/>
<dbReference type="ProteomicsDB" id="58090"/>
<dbReference type="Antibodypedia" id="4135">
    <property type="antibodies" value="64 antibodies from 22 providers"/>
</dbReference>
<dbReference type="DNASU" id="6671"/>
<dbReference type="Ensembl" id="ENST00000222584.8">
    <property type="protein sequence ID" value="ENSP00000222584.3"/>
    <property type="gene ID" value="ENSG00000105866.15"/>
</dbReference>
<dbReference type="GeneID" id="6671"/>
<dbReference type="KEGG" id="hsa:6671"/>
<dbReference type="MANE-Select" id="ENST00000222584.8">
    <property type="protein sequence ID" value="ENSP00000222584.3"/>
    <property type="RefSeq nucleotide sequence ID" value="NM_003112.5"/>
    <property type="RefSeq protein sequence ID" value="NP_003103.2"/>
</dbReference>
<dbReference type="UCSC" id="uc003sva.4">
    <property type="organism name" value="human"/>
</dbReference>
<dbReference type="AGR" id="HGNC:11209"/>
<dbReference type="CTD" id="6671"/>
<dbReference type="DisGeNET" id="6671"/>
<dbReference type="GeneCards" id="SP4"/>
<dbReference type="HGNC" id="HGNC:11209">
    <property type="gene designation" value="SP4"/>
</dbReference>
<dbReference type="HPA" id="ENSG00000105866">
    <property type="expression patterns" value="Low tissue specificity"/>
</dbReference>
<dbReference type="MIM" id="600540">
    <property type="type" value="gene"/>
</dbReference>
<dbReference type="neXtProt" id="NX_Q02446"/>
<dbReference type="OpenTargets" id="ENSG00000105866"/>
<dbReference type="PharmGKB" id="PA36046"/>
<dbReference type="VEuPathDB" id="HostDB:ENSG00000105866"/>
<dbReference type="eggNOG" id="KOG1721">
    <property type="taxonomic scope" value="Eukaryota"/>
</dbReference>
<dbReference type="GeneTree" id="ENSGT00940000157827"/>
<dbReference type="HOGENOM" id="CLU_019688_2_0_1"/>
<dbReference type="InParanoid" id="Q02446"/>
<dbReference type="OMA" id="NQQAILP"/>
<dbReference type="OrthoDB" id="6365676at2759"/>
<dbReference type="PAN-GO" id="Q02446">
    <property type="GO annotations" value="3 GO annotations based on evolutionary models"/>
</dbReference>
<dbReference type="PhylomeDB" id="Q02446"/>
<dbReference type="TreeFam" id="TF350150"/>
<dbReference type="PathwayCommons" id="Q02446"/>
<dbReference type="SignaLink" id="Q02446"/>
<dbReference type="SIGNOR" id="Q02446"/>
<dbReference type="BioGRID-ORCS" id="6671">
    <property type="hits" value="10 hits in 1179 CRISPR screens"/>
</dbReference>
<dbReference type="ChiTaRS" id="SP4">
    <property type="organism name" value="human"/>
</dbReference>
<dbReference type="GeneWiki" id="Sp4_transcription_factor"/>
<dbReference type="GenomeRNAi" id="6671"/>
<dbReference type="Pharos" id="Q02446">
    <property type="development level" value="Tbio"/>
</dbReference>
<dbReference type="PRO" id="PR:Q02446"/>
<dbReference type="Proteomes" id="UP000005640">
    <property type="component" value="Chromosome 7"/>
</dbReference>
<dbReference type="RNAct" id="Q02446">
    <property type="molecule type" value="protein"/>
</dbReference>
<dbReference type="Bgee" id="ENSG00000105866">
    <property type="expression patterns" value="Expressed in cerebellar vermis and 185 other cell types or tissues"/>
</dbReference>
<dbReference type="ExpressionAtlas" id="Q02446">
    <property type="expression patterns" value="baseline and differential"/>
</dbReference>
<dbReference type="GO" id="GO:0000785">
    <property type="term" value="C:chromatin"/>
    <property type="evidence" value="ECO:0000247"/>
    <property type="project" value="NTNU_SB"/>
</dbReference>
<dbReference type="GO" id="GO:0005829">
    <property type="term" value="C:cytosol"/>
    <property type="evidence" value="ECO:0000314"/>
    <property type="project" value="HPA"/>
</dbReference>
<dbReference type="GO" id="GO:0005654">
    <property type="term" value="C:nucleoplasm"/>
    <property type="evidence" value="ECO:0000314"/>
    <property type="project" value="HPA"/>
</dbReference>
<dbReference type="GO" id="GO:0000981">
    <property type="term" value="F:DNA-binding transcription factor activity, RNA polymerase II-specific"/>
    <property type="evidence" value="ECO:0000247"/>
    <property type="project" value="NTNU_SB"/>
</dbReference>
<dbReference type="GO" id="GO:0042802">
    <property type="term" value="F:identical protein binding"/>
    <property type="evidence" value="ECO:0000353"/>
    <property type="project" value="IntAct"/>
</dbReference>
<dbReference type="GO" id="GO:0000978">
    <property type="term" value="F:RNA polymerase II cis-regulatory region sequence-specific DNA binding"/>
    <property type="evidence" value="ECO:0000318"/>
    <property type="project" value="GO_Central"/>
</dbReference>
<dbReference type="GO" id="GO:0043565">
    <property type="term" value="F:sequence-specific DNA binding"/>
    <property type="evidence" value="ECO:0000314"/>
    <property type="project" value="NTNU_SB"/>
</dbReference>
<dbReference type="GO" id="GO:0008270">
    <property type="term" value="F:zinc ion binding"/>
    <property type="evidence" value="ECO:0007669"/>
    <property type="project" value="UniProtKB-KW"/>
</dbReference>
<dbReference type="GO" id="GO:0006357">
    <property type="term" value="P:regulation of transcription by RNA polymerase II"/>
    <property type="evidence" value="ECO:0000314"/>
    <property type="project" value="UniProtKB"/>
</dbReference>
<dbReference type="CDD" id="cd22536">
    <property type="entry name" value="SP4_N"/>
    <property type="match status" value="1"/>
</dbReference>
<dbReference type="FunFam" id="3.30.160.60:FF:000014">
    <property type="entry name" value="Transcription factor Sp3"/>
    <property type="match status" value="1"/>
</dbReference>
<dbReference type="FunFam" id="3.30.160.60:FF:000026">
    <property type="entry name" value="Transcription factor Sp3"/>
    <property type="match status" value="1"/>
</dbReference>
<dbReference type="FunFam" id="3.30.160.60:FF:000061">
    <property type="entry name" value="Transcription factor Sp3"/>
    <property type="match status" value="1"/>
</dbReference>
<dbReference type="Gene3D" id="3.30.160.60">
    <property type="entry name" value="Classic Zinc Finger"/>
    <property type="match status" value="3"/>
</dbReference>
<dbReference type="InterPro" id="IPR039938">
    <property type="entry name" value="Sp4-like"/>
</dbReference>
<dbReference type="InterPro" id="IPR036236">
    <property type="entry name" value="Znf_C2H2_sf"/>
</dbReference>
<dbReference type="InterPro" id="IPR013087">
    <property type="entry name" value="Znf_C2H2_type"/>
</dbReference>
<dbReference type="PANTHER" id="PTHR14947:SF23">
    <property type="entry name" value="SP4 TRANSCRIPTION FACTOR"/>
    <property type="match status" value="1"/>
</dbReference>
<dbReference type="PANTHER" id="PTHR14947">
    <property type="entry name" value="ZINC FINGER PROTEIN"/>
    <property type="match status" value="1"/>
</dbReference>
<dbReference type="Pfam" id="PF00096">
    <property type="entry name" value="zf-C2H2"/>
    <property type="match status" value="3"/>
</dbReference>
<dbReference type="SMART" id="SM00355">
    <property type="entry name" value="ZnF_C2H2"/>
    <property type="match status" value="3"/>
</dbReference>
<dbReference type="SUPFAM" id="SSF57667">
    <property type="entry name" value="beta-beta-alpha zinc fingers"/>
    <property type="match status" value="2"/>
</dbReference>
<dbReference type="PROSITE" id="PS00028">
    <property type="entry name" value="ZINC_FINGER_C2H2_1"/>
    <property type="match status" value="3"/>
</dbReference>
<dbReference type="PROSITE" id="PS50157">
    <property type="entry name" value="ZINC_FINGER_C2H2_2"/>
    <property type="match status" value="3"/>
</dbReference>
<keyword id="KW-0010">Activator</keyword>
<keyword id="KW-0238">DNA-binding</keyword>
<keyword id="KW-0479">Metal-binding</keyword>
<keyword id="KW-0539">Nucleus</keyword>
<keyword id="KW-0597">Phosphoprotein</keyword>
<keyword id="KW-1267">Proteomics identification</keyword>
<keyword id="KW-1185">Reference proteome</keyword>
<keyword id="KW-0677">Repeat</keyword>
<keyword id="KW-0804">Transcription</keyword>
<keyword id="KW-0805">Transcription regulation</keyword>
<keyword id="KW-0862">Zinc</keyword>
<keyword id="KW-0863">Zinc-finger</keyword>
<evidence type="ECO:0000255" key="1">
    <source>
        <dbReference type="PROSITE-ProRule" id="PRU00042"/>
    </source>
</evidence>
<evidence type="ECO:0000256" key="2">
    <source>
        <dbReference type="SAM" id="MobiDB-lite"/>
    </source>
</evidence>
<evidence type="ECO:0000269" key="3">
    <source>
    </source>
</evidence>
<evidence type="ECO:0000269" key="4">
    <source>
    </source>
</evidence>
<evidence type="ECO:0000305" key="5"/>
<evidence type="ECO:0007744" key="6">
    <source>
    </source>
</evidence>